<name>QUEF_PSE14</name>
<organism>
    <name type="scientific">Pseudomonas savastanoi pv. phaseolicola (strain 1448A / Race 6)</name>
    <name type="common">Pseudomonas syringae pv. phaseolicola (strain 1448A / Race 6)</name>
    <dbReference type="NCBI Taxonomy" id="264730"/>
    <lineage>
        <taxon>Bacteria</taxon>
        <taxon>Pseudomonadati</taxon>
        <taxon>Pseudomonadota</taxon>
        <taxon>Gammaproteobacteria</taxon>
        <taxon>Pseudomonadales</taxon>
        <taxon>Pseudomonadaceae</taxon>
        <taxon>Pseudomonas</taxon>
    </lineage>
</organism>
<reference key="1">
    <citation type="journal article" date="2005" name="J. Bacteriol.">
        <title>Whole-genome sequence analysis of Pseudomonas syringae pv. phaseolicola 1448A reveals divergence among pathovars in genes involved in virulence and transposition.</title>
        <authorList>
            <person name="Joardar V."/>
            <person name="Lindeberg M."/>
            <person name="Jackson R.W."/>
            <person name="Selengut J."/>
            <person name="Dodson R."/>
            <person name="Brinkac L.M."/>
            <person name="Daugherty S.C."/>
            <person name="DeBoy R.T."/>
            <person name="Durkin A.S."/>
            <person name="Gwinn Giglio M."/>
            <person name="Madupu R."/>
            <person name="Nelson W.C."/>
            <person name="Rosovitz M.J."/>
            <person name="Sullivan S.A."/>
            <person name="Crabtree J."/>
            <person name="Creasy T."/>
            <person name="Davidsen T.M."/>
            <person name="Haft D.H."/>
            <person name="Zafar N."/>
            <person name="Zhou L."/>
            <person name="Halpin R."/>
            <person name="Holley T."/>
            <person name="Khouri H.M."/>
            <person name="Feldblyum T.V."/>
            <person name="White O."/>
            <person name="Fraser C.M."/>
            <person name="Chatterjee A.K."/>
            <person name="Cartinhour S."/>
            <person name="Schneider D."/>
            <person name="Mansfield J.W."/>
            <person name="Collmer A."/>
            <person name="Buell R."/>
        </authorList>
    </citation>
    <scope>NUCLEOTIDE SEQUENCE [LARGE SCALE GENOMIC DNA]</scope>
    <source>
        <strain>1448A / Race 6</strain>
    </source>
</reference>
<gene>
    <name evidence="1" type="primary">queF</name>
    <name type="ordered locus">PSPPH_1862</name>
</gene>
<comment type="function">
    <text evidence="1">Catalyzes the NADPH-dependent reduction of 7-cyano-7-deazaguanine (preQ0) to 7-aminomethyl-7-deazaguanine (preQ1).</text>
</comment>
<comment type="catalytic activity">
    <reaction evidence="1">
        <text>7-aminomethyl-7-carbaguanine + 2 NADP(+) = 7-cyano-7-deazaguanine + 2 NADPH + 3 H(+)</text>
        <dbReference type="Rhea" id="RHEA:13409"/>
        <dbReference type="ChEBI" id="CHEBI:15378"/>
        <dbReference type="ChEBI" id="CHEBI:45075"/>
        <dbReference type="ChEBI" id="CHEBI:57783"/>
        <dbReference type="ChEBI" id="CHEBI:58349"/>
        <dbReference type="ChEBI" id="CHEBI:58703"/>
        <dbReference type="EC" id="1.7.1.13"/>
    </reaction>
</comment>
<comment type="pathway">
    <text evidence="1">tRNA modification; tRNA-queuosine biosynthesis.</text>
</comment>
<comment type="subunit">
    <text evidence="1">Homodimer.</text>
</comment>
<comment type="subcellular location">
    <subcellularLocation>
        <location evidence="1">Cytoplasm</location>
    </subcellularLocation>
</comment>
<comment type="similarity">
    <text evidence="1">Belongs to the GTP cyclohydrolase I family. QueF type 2 subfamily.</text>
</comment>
<protein>
    <recommendedName>
        <fullName evidence="1">NADPH-dependent 7-cyano-7-deazaguanine reductase</fullName>
        <ecNumber evidence="1">1.7.1.13</ecNumber>
    </recommendedName>
    <alternativeName>
        <fullName evidence="1">7-cyano-7-carbaguanine reductase</fullName>
    </alternativeName>
    <alternativeName>
        <fullName evidence="1">NADPH-dependent nitrile oxidoreductase</fullName>
    </alternativeName>
    <alternativeName>
        <fullName evidence="1">PreQ(0) reductase</fullName>
    </alternativeName>
</protein>
<evidence type="ECO:0000255" key="1">
    <source>
        <dbReference type="HAMAP-Rule" id="MF_00817"/>
    </source>
</evidence>
<keyword id="KW-0963">Cytoplasm</keyword>
<keyword id="KW-0521">NADP</keyword>
<keyword id="KW-0560">Oxidoreductase</keyword>
<keyword id="KW-0671">Queuosine biosynthesis</keyword>
<proteinExistence type="inferred from homology"/>
<accession>Q48KI2</accession>
<feature type="chain" id="PRO_0000163047" description="NADPH-dependent 7-cyano-7-deazaguanine reductase">
    <location>
        <begin position="1"/>
        <end position="276"/>
    </location>
</feature>
<feature type="active site" description="Thioimide intermediate" evidence="1">
    <location>
        <position position="184"/>
    </location>
</feature>
<feature type="active site" description="Proton donor" evidence="1">
    <location>
        <position position="191"/>
    </location>
</feature>
<feature type="binding site" evidence="1">
    <location>
        <begin position="83"/>
        <end position="85"/>
    </location>
    <ligand>
        <name>substrate</name>
    </ligand>
</feature>
<feature type="binding site" evidence="1">
    <location>
        <begin position="85"/>
        <end position="86"/>
    </location>
    <ligand>
        <name>NADPH</name>
        <dbReference type="ChEBI" id="CHEBI:57783"/>
    </ligand>
</feature>
<feature type="binding site" evidence="1">
    <location>
        <begin position="223"/>
        <end position="224"/>
    </location>
    <ligand>
        <name>substrate</name>
    </ligand>
</feature>
<feature type="binding site" evidence="1">
    <location>
        <begin position="252"/>
        <end position="253"/>
    </location>
    <ligand>
        <name>NADPH</name>
        <dbReference type="ChEBI" id="CHEBI:57783"/>
    </ligand>
</feature>
<dbReference type="EC" id="1.7.1.13" evidence="1"/>
<dbReference type="EMBL" id="CP000058">
    <property type="protein sequence ID" value="AAZ34627.1"/>
    <property type="molecule type" value="Genomic_DNA"/>
</dbReference>
<dbReference type="RefSeq" id="WP_011168254.1">
    <property type="nucleotide sequence ID" value="NC_005773.3"/>
</dbReference>
<dbReference type="SMR" id="Q48KI2"/>
<dbReference type="KEGG" id="psp:PSPPH_1862"/>
<dbReference type="eggNOG" id="COG0780">
    <property type="taxonomic scope" value="Bacteria"/>
</dbReference>
<dbReference type="eggNOG" id="COG2904">
    <property type="taxonomic scope" value="Bacteria"/>
</dbReference>
<dbReference type="HOGENOM" id="CLU_054738_0_0_6"/>
<dbReference type="UniPathway" id="UPA00392"/>
<dbReference type="Proteomes" id="UP000000551">
    <property type="component" value="Chromosome"/>
</dbReference>
<dbReference type="GO" id="GO:0005737">
    <property type="term" value="C:cytoplasm"/>
    <property type="evidence" value="ECO:0007669"/>
    <property type="project" value="UniProtKB-SubCell"/>
</dbReference>
<dbReference type="GO" id="GO:0033739">
    <property type="term" value="F:preQ1 synthase activity"/>
    <property type="evidence" value="ECO:0007669"/>
    <property type="project" value="UniProtKB-UniRule"/>
</dbReference>
<dbReference type="GO" id="GO:0008616">
    <property type="term" value="P:queuosine biosynthetic process"/>
    <property type="evidence" value="ECO:0007669"/>
    <property type="project" value="UniProtKB-UniRule"/>
</dbReference>
<dbReference type="GO" id="GO:0006400">
    <property type="term" value="P:tRNA modification"/>
    <property type="evidence" value="ECO:0007669"/>
    <property type="project" value="UniProtKB-UniRule"/>
</dbReference>
<dbReference type="Gene3D" id="3.30.1130.10">
    <property type="match status" value="2"/>
</dbReference>
<dbReference type="HAMAP" id="MF_00817">
    <property type="entry name" value="QueF_type2"/>
    <property type="match status" value="1"/>
</dbReference>
<dbReference type="InterPro" id="IPR043133">
    <property type="entry name" value="GTP-CH-I_C/QueF"/>
</dbReference>
<dbReference type="InterPro" id="IPR050084">
    <property type="entry name" value="NADPH_dep_7-cyano-7-deazaG_red"/>
</dbReference>
<dbReference type="InterPro" id="IPR029500">
    <property type="entry name" value="QueF"/>
</dbReference>
<dbReference type="InterPro" id="IPR029139">
    <property type="entry name" value="QueF_N"/>
</dbReference>
<dbReference type="InterPro" id="IPR016428">
    <property type="entry name" value="QueF_type2"/>
</dbReference>
<dbReference type="NCBIfam" id="TIGR03138">
    <property type="entry name" value="QueF"/>
    <property type="match status" value="1"/>
</dbReference>
<dbReference type="PANTHER" id="PTHR34354">
    <property type="entry name" value="NADPH-DEPENDENT 7-CYANO-7-DEAZAGUANINE REDUCTASE"/>
    <property type="match status" value="1"/>
</dbReference>
<dbReference type="PANTHER" id="PTHR34354:SF1">
    <property type="entry name" value="NADPH-DEPENDENT 7-CYANO-7-DEAZAGUANINE REDUCTASE"/>
    <property type="match status" value="1"/>
</dbReference>
<dbReference type="Pfam" id="PF14489">
    <property type="entry name" value="QueF"/>
    <property type="match status" value="1"/>
</dbReference>
<dbReference type="Pfam" id="PF14819">
    <property type="entry name" value="QueF_N"/>
    <property type="match status" value="1"/>
</dbReference>
<dbReference type="PIRSF" id="PIRSF004750">
    <property type="entry name" value="Nitrile_oxidored_YqcD_prd"/>
    <property type="match status" value="1"/>
</dbReference>
<dbReference type="SUPFAM" id="SSF55620">
    <property type="entry name" value="Tetrahydrobiopterin biosynthesis enzymes-like"/>
    <property type="match status" value="1"/>
</dbReference>
<sequence length="276" mass="30770">MHPAAEHSPLGKSSEYIATYTPSLLFPISRAAKWAELGLTAQTLPYQGVDFWNCYELSWLLPSGKPVVAIAEFSIPADSPNIIESKSFKLYLNSLNQTAFATVEQVQTTLEQDLSTAAGKPVGVRIRSLSDIEGEGVATLPGVCIDDLDITVSSYDRPQPELLCCDESQIIEESVHSHLLKSNCPVTSQPDWGSVVVEYRGAALDHSSLLAYIVSFRQHSDFHEQCVERIFLDLQRLLKPEKLTVYARYVRRGGLDINPYRSTETLDVNNRRLARQ</sequence>